<feature type="chain" id="PRO_0000242292" description="Phosphomethylpyrimidine synthase">
    <location>
        <begin position="1"/>
        <end position="628"/>
    </location>
</feature>
<feature type="region of interest" description="Disordered" evidence="2">
    <location>
        <begin position="1"/>
        <end position="37"/>
    </location>
</feature>
<feature type="compositionally biased region" description="Polar residues" evidence="2">
    <location>
        <begin position="1"/>
        <end position="14"/>
    </location>
</feature>
<feature type="compositionally biased region" description="Basic and acidic residues" evidence="2">
    <location>
        <begin position="19"/>
        <end position="37"/>
    </location>
</feature>
<feature type="binding site" evidence="1">
    <location>
        <position position="260"/>
    </location>
    <ligand>
        <name>substrate</name>
    </ligand>
</feature>
<feature type="binding site" evidence="1">
    <location>
        <position position="289"/>
    </location>
    <ligand>
        <name>substrate</name>
    </ligand>
</feature>
<feature type="binding site" evidence="1">
    <location>
        <position position="318"/>
    </location>
    <ligand>
        <name>substrate</name>
    </ligand>
</feature>
<feature type="binding site" evidence="1">
    <location>
        <position position="354"/>
    </location>
    <ligand>
        <name>substrate</name>
    </ligand>
</feature>
<feature type="binding site" evidence="1">
    <location>
        <begin position="374"/>
        <end position="376"/>
    </location>
    <ligand>
        <name>substrate</name>
    </ligand>
</feature>
<feature type="binding site" evidence="1">
    <location>
        <begin position="415"/>
        <end position="418"/>
    </location>
    <ligand>
        <name>substrate</name>
    </ligand>
</feature>
<feature type="binding site" evidence="1">
    <location>
        <position position="454"/>
    </location>
    <ligand>
        <name>substrate</name>
    </ligand>
</feature>
<feature type="binding site" evidence="1">
    <location>
        <position position="458"/>
    </location>
    <ligand>
        <name>Zn(2+)</name>
        <dbReference type="ChEBI" id="CHEBI:29105"/>
    </ligand>
</feature>
<feature type="binding site" evidence="1">
    <location>
        <position position="481"/>
    </location>
    <ligand>
        <name>substrate</name>
    </ligand>
</feature>
<feature type="binding site" evidence="1">
    <location>
        <position position="522"/>
    </location>
    <ligand>
        <name>Zn(2+)</name>
        <dbReference type="ChEBI" id="CHEBI:29105"/>
    </ligand>
</feature>
<feature type="binding site" evidence="1">
    <location>
        <position position="602"/>
    </location>
    <ligand>
        <name>[4Fe-4S] cluster</name>
        <dbReference type="ChEBI" id="CHEBI:49883"/>
        <note>4Fe-4S-S-AdoMet</note>
    </ligand>
</feature>
<feature type="binding site" evidence="1">
    <location>
        <position position="605"/>
    </location>
    <ligand>
        <name>[4Fe-4S] cluster</name>
        <dbReference type="ChEBI" id="CHEBI:49883"/>
        <note>4Fe-4S-S-AdoMet</note>
    </ligand>
</feature>
<feature type="binding site" evidence="1">
    <location>
        <position position="610"/>
    </location>
    <ligand>
        <name>[4Fe-4S] cluster</name>
        <dbReference type="ChEBI" id="CHEBI:49883"/>
        <note>4Fe-4S-S-AdoMet</note>
    </ligand>
</feature>
<accession>Q1QEM6</accession>
<gene>
    <name evidence="1" type="primary">thiC</name>
    <name type="ordered locus">Pcryo_0093</name>
</gene>
<keyword id="KW-0004">4Fe-4S</keyword>
<keyword id="KW-0408">Iron</keyword>
<keyword id="KW-0411">Iron-sulfur</keyword>
<keyword id="KW-0456">Lyase</keyword>
<keyword id="KW-0479">Metal-binding</keyword>
<keyword id="KW-0949">S-adenosyl-L-methionine</keyword>
<keyword id="KW-0784">Thiamine biosynthesis</keyword>
<keyword id="KW-0862">Zinc</keyword>
<sequence>MTISDIGSQATTHTPVKASKADALKTPAHRSETDARFEEDARDLHRILPASRKVYIEGSRPDIQVPMREITLDPTPIQGVSESEWEQNPPFYVYDTSGVYTDPNAAIDLTKGLPKLREGWIDERGDTEQLAGLSSSYGLARARDISTANLRFAHIDKPRRAKAVDGKVGNVTQLHYARRGIITPEMEYIAIRETQKQHELTDMRQHEGETFGAHTPAIITPEFVRSEVAAGRAIIPNNINHPESEPMIIGRNFLVKINANIGNSALGSSIDEEVSKMTWATRWGADNIMDLSTGNHIHETREWLIRNSPVPIGTVPIYQALEKVDGVAEDLTWEIFRDTLIEQAEQGVDYFTIHAGVLLEYVPLTAGRLTGIVSRGGSIMAQWCMFHNKESFLYTHFEDICEIMKQYDVAFSLGDGLRPGCLQDANDEAQFGELRTLGELTQVAWKHDVQVMIEGPGHVAMNRIKENMDLQLEVCADAPFYTLGPLTTDIAPGYDHITSAIGAAMIGWFGTAMLCYVTPKEHLGLPNKKDVKDGIITYKIAAHAADLAKGHPGAQARDNALSKARFEFRWDDQFNLALDPDTAREFHDETLPKDAHKTAHFCSMCGPKFCSMKITQNVREYAKGLNAQ</sequence>
<organism>
    <name type="scientific">Psychrobacter cryohalolentis (strain ATCC BAA-1226 / DSM 17306 / VKM B-2378 / K5)</name>
    <dbReference type="NCBI Taxonomy" id="335284"/>
    <lineage>
        <taxon>Bacteria</taxon>
        <taxon>Pseudomonadati</taxon>
        <taxon>Pseudomonadota</taxon>
        <taxon>Gammaproteobacteria</taxon>
        <taxon>Moraxellales</taxon>
        <taxon>Moraxellaceae</taxon>
        <taxon>Psychrobacter</taxon>
    </lineage>
</organism>
<dbReference type="EC" id="4.1.99.17" evidence="1"/>
<dbReference type="EMBL" id="CP000323">
    <property type="protein sequence ID" value="ABE73877.1"/>
    <property type="molecule type" value="Genomic_DNA"/>
</dbReference>
<dbReference type="RefSeq" id="WP_011512468.1">
    <property type="nucleotide sequence ID" value="NC_007969.1"/>
</dbReference>
<dbReference type="SMR" id="Q1QEM6"/>
<dbReference type="STRING" id="335284.Pcryo_0093"/>
<dbReference type="KEGG" id="pcr:Pcryo_0093"/>
<dbReference type="eggNOG" id="COG0422">
    <property type="taxonomic scope" value="Bacteria"/>
</dbReference>
<dbReference type="HOGENOM" id="CLU_013181_2_1_6"/>
<dbReference type="UniPathway" id="UPA00060"/>
<dbReference type="Proteomes" id="UP000002425">
    <property type="component" value="Chromosome"/>
</dbReference>
<dbReference type="GO" id="GO:0005829">
    <property type="term" value="C:cytosol"/>
    <property type="evidence" value="ECO:0007669"/>
    <property type="project" value="TreeGrafter"/>
</dbReference>
<dbReference type="GO" id="GO:0051539">
    <property type="term" value="F:4 iron, 4 sulfur cluster binding"/>
    <property type="evidence" value="ECO:0007669"/>
    <property type="project" value="UniProtKB-KW"/>
</dbReference>
<dbReference type="GO" id="GO:0016830">
    <property type="term" value="F:carbon-carbon lyase activity"/>
    <property type="evidence" value="ECO:0007669"/>
    <property type="project" value="InterPro"/>
</dbReference>
<dbReference type="GO" id="GO:0008270">
    <property type="term" value="F:zinc ion binding"/>
    <property type="evidence" value="ECO:0007669"/>
    <property type="project" value="UniProtKB-UniRule"/>
</dbReference>
<dbReference type="GO" id="GO:0009228">
    <property type="term" value="P:thiamine biosynthetic process"/>
    <property type="evidence" value="ECO:0007669"/>
    <property type="project" value="UniProtKB-KW"/>
</dbReference>
<dbReference type="GO" id="GO:0009229">
    <property type="term" value="P:thiamine diphosphate biosynthetic process"/>
    <property type="evidence" value="ECO:0007669"/>
    <property type="project" value="UniProtKB-UniRule"/>
</dbReference>
<dbReference type="FunFam" id="3.20.20.540:FF:000001">
    <property type="entry name" value="Phosphomethylpyrimidine synthase"/>
    <property type="match status" value="1"/>
</dbReference>
<dbReference type="Gene3D" id="6.10.250.620">
    <property type="match status" value="1"/>
</dbReference>
<dbReference type="Gene3D" id="3.20.20.540">
    <property type="entry name" value="Radical SAM ThiC family, central domain"/>
    <property type="match status" value="1"/>
</dbReference>
<dbReference type="HAMAP" id="MF_00089">
    <property type="entry name" value="ThiC"/>
    <property type="match status" value="1"/>
</dbReference>
<dbReference type="InterPro" id="IPR037509">
    <property type="entry name" value="ThiC"/>
</dbReference>
<dbReference type="InterPro" id="IPR025747">
    <property type="entry name" value="ThiC-associated_dom"/>
</dbReference>
<dbReference type="InterPro" id="IPR038521">
    <property type="entry name" value="ThiC/Bza_core_dom"/>
</dbReference>
<dbReference type="InterPro" id="IPR002817">
    <property type="entry name" value="ThiC/BzaA/B"/>
</dbReference>
<dbReference type="NCBIfam" id="NF006763">
    <property type="entry name" value="PRK09284.1"/>
    <property type="match status" value="1"/>
</dbReference>
<dbReference type="NCBIfam" id="NF009895">
    <property type="entry name" value="PRK13352.1"/>
    <property type="match status" value="1"/>
</dbReference>
<dbReference type="NCBIfam" id="TIGR00190">
    <property type="entry name" value="thiC"/>
    <property type="match status" value="1"/>
</dbReference>
<dbReference type="PANTHER" id="PTHR30557:SF1">
    <property type="entry name" value="PHOSPHOMETHYLPYRIMIDINE SYNTHASE, CHLOROPLASTIC"/>
    <property type="match status" value="1"/>
</dbReference>
<dbReference type="PANTHER" id="PTHR30557">
    <property type="entry name" value="THIAMINE BIOSYNTHESIS PROTEIN THIC"/>
    <property type="match status" value="1"/>
</dbReference>
<dbReference type="Pfam" id="PF13667">
    <property type="entry name" value="ThiC-associated"/>
    <property type="match status" value="1"/>
</dbReference>
<dbReference type="Pfam" id="PF01964">
    <property type="entry name" value="ThiC_Rad_SAM"/>
    <property type="match status" value="1"/>
</dbReference>
<dbReference type="SFLD" id="SFLDF00407">
    <property type="entry name" value="phosphomethylpyrimidine_syntha"/>
    <property type="match status" value="1"/>
</dbReference>
<dbReference type="SFLD" id="SFLDG01114">
    <property type="entry name" value="phosphomethylpyrimidine_syntha"/>
    <property type="match status" value="1"/>
</dbReference>
<dbReference type="SFLD" id="SFLDS00113">
    <property type="entry name" value="Radical_SAM_Phosphomethylpyrim"/>
    <property type="match status" value="1"/>
</dbReference>
<proteinExistence type="inferred from homology"/>
<comment type="function">
    <text evidence="1">Catalyzes the synthesis of the hydroxymethylpyrimidine phosphate (HMP-P) moiety of thiamine from aminoimidazole ribotide (AIR) in a radical S-adenosyl-L-methionine (SAM)-dependent reaction.</text>
</comment>
<comment type="catalytic activity">
    <reaction evidence="1">
        <text>5-amino-1-(5-phospho-beta-D-ribosyl)imidazole + S-adenosyl-L-methionine = 4-amino-2-methyl-5-(phosphooxymethyl)pyrimidine + CO + 5'-deoxyadenosine + formate + L-methionine + 3 H(+)</text>
        <dbReference type="Rhea" id="RHEA:24840"/>
        <dbReference type="ChEBI" id="CHEBI:15378"/>
        <dbReference type="ChEBI" id="CHEBI:15740"/>
        <dbReference type="ChEBI" id="CHEBI:17245"/>
        <dbReference type="ChEBI" id="CHEBI:17319"/>
        <dbReference type="ChEBI" id="CHEBI:57844"/>
        <dbReference type="ChEBI" id="CHEBI:58354"/>
        <dbReference type="ChEBI" id="CHEBI:59789"/>
        <dbReference type="ChEBI" id="CHEBI:137981"/>
        <dbReference type="EC" id="4.1.99.17"/>
    </reaction>
</comment>
<comment type="cofactor">
    <cofactor evidence="1">
        <name>[4Fe-4S] cluster</name>
        <dbReference type="ChEBI" id="CHEBI:49883"/>
    </cofactor>
    <text evidence="1">Binds 1 [4Fe-4S] cluster per subunit. The cluster is coordinated with 3 cysteines and an exchangeable S-adenosyl-L-methionine.</text>
</comment>
<comment type="pathway">
    <text evidence="1">Cofactor biosynthesis; thiamine diphosphate biosynthesis.</text>
</comment>
<comment type="subunit">
    <text evidence="1">Homodimer.</text>
</comment>
<comment type="similarity">
    <text evidence="1">Belongs to the ThiC family.</text>
</comment>
<name>THIC_PSYCK</name>
<reference key="1">
    <citation type="submission" date="2006-03" db="EMBL/GenBank/DDBJ databases">
        <title>Complete sequence of chromosome of Psychrobacter cryohalolentis K5.</title>
        <authorList>
            <consortium name="US DOE Joint Genome Institute"/>
            <person name="Copeland A."/>
            <person name="Lucas S."/>
            <person name="Lapidus A."/>
            <person name="Barry K."/>
            <person name="Detter J.C."/>
            <person name="Glavina T."/>
            <person name="Hammon N."/>
            <person name="Israni S."/>
            <person name="Dalin E."/>
            <person name="Tice H."/>
            <person name="Pitluck S."/>
            <person name="Brettin T."/>
            <person name="Bruce D."/>
            <person name="Han C."/>
            <person name="Tapia R."/>
            <person name="Sims D.R."/>
            <person name="Gilna P."/>
            <person name="Schmutz J."/>
            <person name="Larimer F."/>
            <person name="Land M."/>
            <person name="Hauser L."/>
            <person name="Kyrpides N."/>
            <person name="Kim E."/>
            <person name="Richardson P."/>
        </authorList>
    </citation>
    <scope>NUCLEOTIDE SEQUENCE [LARGE SCALE GENOMIC DNA]</scope>
    <source>
        <strain>ATCC BAA-1226 / DSM 17306 / VKM B-2378 / K5</strain>
    </source>
</reference>
<protein>
    <recommendedName>
        <fullName evidence="1">Phosphomethylpyrimidine synthase</fullName>
        <ecNumber evidence="1">4.1.99.17</ecNumber>
    </recommendedName>
    <alternativeName>
        <fullName evidence="1">Hydroxymethylpyrimidine phosphate synthase</fullName>
        <shortName evidence="1">HMP-P synthase</shortName>
        <shortName evidence="1">HMP-phosphate synthase</shortName>
        <shortName evidence="1">HMPP synthase</shortName>
    </alternativeName>
    <alternativeName>
        <fullName evidence="1">Thiamine biosynthesis protein ThiC</fullName>
    </alternativeName>
</protein>
<evidence type="ECO:0000255" key="1">
    <source>
        <dbReference type="HAMAP-Rule" id="MF_00089"/>
    </source>
</evidence>
<evidence type="ECO:0000256" key="2">
    <source>
        <dbReference type="SAM" id="MobiDB-lite"/>
    </source>
</evidence>